<feature type="chain" id="PRO_0000206847" description="Protein MopB">
    <location>
        <begin position="1"/>
        <end position="140"/>
    </location>
</feature>
<feature type="transmembrane region" description="Helical" evidence="1">
    <location>
        <begin position="31"/>
        <end position="51"/>
    </location>
</feature>
<feature type="region of interest" description="Disordered" evidence="2">
    <location>
        <begin position="104"/>
        <end position="124"/>
    </location>
</feature>
<feature type="compositionally biased region" description="Polar residues" evidence="2">
    <location>
        <begin position="104"/>
        <end position="119"/>
    </location>
</feature>
<dbReference type="EMBL" id="X72969">
    <property type="protein sequence ID" value="CAA51475.1"/>
    <property type="molecule type" value="Genomic_DNA"/>
</dbReference>
<dbReference type="PIR" id="S35275">
    <property type="entry name" value="S35275"/>
</dbReference>
<dbReference type="SMR" id="P34199"/>
<dbReference type="GO" id="GO:0009425">
    <property type="term" value="C:bacterial-type flagellum basal body"/>
    <property type="evidence" value="ECO:0007669"/>
    <property type="project" value="UniProtKB-SubCell"/>
</dbReference>
<dbReference type="GO" id="GO:0005886">
    <property type="term" value="C:plasma membrane"/>
    <property type="evidence" value="ECO:0007669"/>
    <property type="project" value="UniProtKB-SubCell"/>
</dbReference>
<dbReference type="GO" id="GO:0044781">
    <property type="term" value="P:bacterial-type flagellum organization"/>
    <property type="evidence" value="ECO:0007669"/>
    <property type="project" value="InterPro"/>
</dbReference>
<dbReference type="InterPro" id="IPR022781">
    <property type="entry name" value="Flagellar_biosynth_FliO"/>
</dbReference>
<dbReference type="InterPro" id="IPR052205">
    <property type="entry name" value="FliO/MopB"/>
</dbReference>
<dbReference type="NCBIfam" id="TIGR03500">
    <property type="entry name" value="FliO_TIGR"/>
    <property type="match status" value="1"/>
</dbReference>
<dbReference type="PANTHER" id="PTHR38766">
    <property type="entry name" value="FLAGELLAR PROTEIN FLIO"/>
    <property type="match status" value="1"/>
</dbReference>
<dbReference type="PANTHER" id="PTHR38766:SF1">
    <property type="entry name" value="FLAGELLAR PROTEIN FLIO"/>
    <property type="match status" value="1"/>
</dbReference>
<dbReference type="Pfam" id="PF04347">
    <property type="entry name" value="FliO"/>
    <property type="match status" value="1"/>
</dbReference>
<keyword id="KW-0975">Bacterial flagellum</keyword>
<keyword id="KW-1003">Cell membrane</keyword>
<keyword id="KW-0472">Membrane</keyword>
<keyword id="KW-0812">Transmembrane</keyword>
<keyword id="KW-1133">Transmembrane helix</keyword>
<keyword id="KW-0843">Virulence</keyword>
<comment type="function">
    <text>Required for both, motility and virulence.</text>
</comment>
<comment type="subcellular location">
    <subcellularLocation>
        <location>Cell membrane</location>
        <topology>Single-pass membrane protein</topology>
    </subcellularLocation>
    <subcellularLocation>
        <location>Bacterial flagellum basal body</location>
    </subcellularLocation>
</comment>
<comment type="similarity">
    <text evidence="3">Belongs to the FliO/MopB family.</text>
</comment>
<evidence type="ECO:0000255" key="1"/>
<evidence type="ECO:0000256" key="2">
    <source>
        <dbReference type="SAM" id="MobiDB-lite"/>
    </source>
</evidence>
<evidence type="ECO:0000305" key="3"/>
<reference key="1">
    <citation type="journal article" date="1993" name="Mol. Microbiol.">
        <title>A pleiotropic reduced virulence (Rvi-) mutant of Erwinia carotovora subspecies atroseptica is defective in flagella assembly proteins that are conserved in plant and animal bacterial pathogens.</title>
        <authorList>
            <person name="Mulholland V."/>
            <person name="Hinton J.C.D."/>
            <person name="Sidebotham J."/>
            <person name="Toth I.K."/>
            <person name="Hyman L.J."/>
            <person name="Perombelon M.C.M."/>
            <person name="Reeves P.J."/>
            <person name="Salmond G.P.C."/>
        </authorList>
    </citation>
    <scope>NUCLEOTIDE SEQUENCE [GENOMIC DNA]</scope>
    <source>
        <strain>SCRI 193</strain>
    </source>
</reference>
<sequence>MAIASISSPAPVASQQSTLVTEPPLTSSMLLTQVGSVLAGILLFILLIAWLARKLGFAPQAKQNKLLKVVSSCPVGQRERVVIVEVDNTWLVLGVTAQQITPLHTLPAQPTNDSSSTGDTKPVDFNQLLKKVLKRPEKSE</sequence>
<name>MOPB_PECCC</name>
<accession>P34199</accession>
<proteinExistence type="inferred from homology"/>
<organism>
    <name type="scientific">Pectobacterium carotovorum subsp. carotovorum</name>
    <name type="common">Erwinia carotovora subsp. carotovora</name>
    <dbReference type="NCBI Taxonomy" id="555"/>
    <lineage>
        <taxon>Bacteria</taxon>
        <taxon>Pseudomonadati</taxon>
        <taxon>Pseudomonadota</taxon>
        <taxon>Gammaproteobacteria</taxon>
        <taxon>Enterobacterales</taxon>
        <taxon>Pectobacteriaceae</taxon>
        <taxon>Pectobacterium</taxon>
    </lineage>
</organism>
<gene>
    <name type="primary">mopB</name>
</gene>
<protein>
    <recommendedName>
        <fullName>Protein MopB</fullName>
    </recommendedName>
</protein>